<feature type="chain" id="PRO_0000280846" description="Enolase">
    <location>
        <begin position="1"/>
        <end position="428"/>
    </location>
</feature>
<feature type="active site" description="Proton donor" evidence="1">
    <location>
        <position position="205"/>
    </location>
</feature>
<feature type="active site" description="Proton acceptor" evidence="1">
    <location>
        <position position="337"/>
    </location>
</feature>
<feature type="binding site" evidence="1">
    <location>
        <position position="163"/>
    </location>
    <ligand>
        <name>(2R)-2-phosphoglycerate</name>
        <dbReference type="ChEBI" id="CHEBI:58289"/>
    </ligand>
</feature>
<feature type="binding site" evidence="1">
    <location>
        <position position="242"/>
    </location>
    <ligand>
        <name>Mg(2+)</name>
        <dbReference type="ChEBI" id="CHEBI:18420"/>
    </ligand>
</feature>
<feature type="binding site" evidence="1">
    <location>
        <position position="285"/>
    </location>
    <ligand>
        <name>Mg(2+)</name>
        <dbReference type="ChEBI" id="CHEBI:18420"/>
    </ligand>
</feature>
<feature type="binding site" evidence="1">
    <location>
        <position position="312"/>
    </location>
    <ligand>
        <name>Mg(2+)</name>
        <dbReference type="ChEBI" id="CHEBI:18420"/>
    </ligand>
</feature>
<feature type="binding site" evidence="1">
    <location>
        <position position="337"/>
    </location>
    <ligand>
        <name>(2R)-2-phosphoglycerate</name>
        <dbReference type="ChEBI" id="CHEBI:58289"/>
    </ligand>
</feature>
<feature type="binding site" evidence="1">
    <location>
        <position position="366"/>
    </location>
    <ligand>
        <name>(2R)-2-phosphoglycerate</name>
        <dbReference type="ChEBI" id="CHEBI:58289"/>
    </ligand>
</feature>
<feature type="binding site" evidence="1">
    <location>
        <position position="367"/>
    </location>
    <ligand>
        <name>(2R)-2-phosphoglycerate</name>
        <dbReference type="ChEBI" id="CHEBI:58289"/>
    </ligand>
</feature>
<feature type="binding site" evidence="1">
    <location>
        <position position="388"/>
    </location>
    <ligand>
        <name>(2R)-2-phosphoglycerate</name>
        <dbReference type="ChEBI" id="CHEBI:58289"/>
    </ligand>
</feature>
<comment type="function">
    <text evidence="1">Catalyzes the reversible conversion of 2-phosphoglycerate (2-PG) into phosphoenolpyruvate (PEP). It is essential for the degradation of carbohydrates via glycolysis.</text>
</comment>
<comment type="catalytic activity">
    <reaction evidence="1">
        <text>(2R)-2-phosphoglycerate = phosphoenolpyruvate + H2O</text>
        <dbReference type="Rhea" id="RHEA:10164"/>
        <dbReference type="ChEBI" id="CHEBI:15377"/>
        <dbReference type="ChEBI" id="CHEBI:58289"/>
        <dbReference type="ChEBI" id="CHEBI:58702"/>
        <dbReference type="EC" id="4.2.1.11"/>
    </reaction>
</comment>
<comment type="cofactor">
    <cofactor evidence="1">
        <name>Mg(2+)</name>
        <dbReference type="ChEBI" id="CHEBI:18420"/>
    </cofactor>
    <text evidence="1">Binds a second Mg(2+) ion via substrate during catalysis.</text>
</comment>
<comment type="pathway">
    <text evidence="1">Carbohydrate degradation; glycolysis; pyruvate from D-glyceraldehyde 3-phosphate: step 4/5.</text>
</comment>
<comment type="subcellular location">
    <subcellularLocation>
        <location evidence="1">Cytoplasm</location>
    </subcellularLocation>
    <subcellularLocation>
        <location evidence="1">Secreted</location>
    </subcellularLocation>
    <subcellularLocation>
        <location evidence="1">Cell surface</location>
    </subcellularLocation>
    <text evidence="1">Fractions of enolase are present in both the cytoplasm and on the cell surface.</text>
</comment>
<comment type="similarity">
    <text evidence="1">Belongs to the enolase family.</text>
</comment>
<evidence type="ECO:0000255" key="1">
    <source>
        <dbReference type="HAMAP-Rule" id="MF_00318"/>
    </source>
</evidence>
<organism>
    <name type="scientific">Erythrobacter litoralis (strain HTCC2594)</name>
    <dbReference type="NCBI Taxonomy" id="314225"/>
    <lineage>
        <taxon>Bacteria</taxon>
        <taxon>Pseudomonadati</taxon>
        <taxon>Pseudomonadota</taxon>
        <taxon>Alphaproteobacteria</taxon>
        <taxon>Sphingomonadales</taxon>
        <taxon>Erythrobacteraceae</taxon>
        <taxon>Erythrobacter/Porphyrobacter group</taxon>
        <taxon>Erythrobacter</taxon>
    </lineage>
</organism>
<proteinExistence type="inferred from homology"/>
<protein>
    <recommendedName>
        <fullName evidence="1">Enolase</fullName>
        <ecNumber evidence="1">4.2.1.11</ecNumber>
    </recommendedName>
    <alternativeName>
        <fullName evidence="1">2-phospho-D-glycerate hydro-lyase</fullName>
    </alternativeName>
    <alternativeName>
        <fullName evidence="1">2-phosphoglycerate dehydratase</fullName>
    </alternativeName>
</protein>
<reference key="1">
    <citation type="journal article" date="2009" name="J. Bacteriol.">
        <title>Complete genome sequence of Erythrobacter litoralis HTCC2594.</title>
        <authorList>
            <person name="Oh H.M."/>
            <person name="Giovannoni S.J."/>
            <person name="Ferriera S."/>
            <person name="Johnson J."/>
            <person name="Cho J.C."/>
        </authorList>
    </citation>
    <scope>NUCLEOTIDE SEQUENCE [LARGE SCALE GENOMIC DNA]</scope>
    <source>
        <strain>HTCC2594</strain>
    </source>
</reference>
<accession>Q2NAQ1</accession>
<sequence>MTAIIDLHAREILDSRGNPTVEVDVLLEDGSFGRAAVPSGASTGAHEAIELRDGDQGRYLGKGVTRAVDAVNTTIADTLLGLDAEDQRDIDTVMLDLDGTPNKAKLGANAILGTSLAVAKAAAAARGMPLWAYVGGVSAHMLPVPMMNIVNGGEHADNPIDIQEFMVMPVGADSLAEAVRWGAEIFHTLKKGLSEKGLSTSVGDEGGFAPDIASTRDALDFIMQSIEKAGFKPGEEVALALDCASTEFFADGRYDLAGEEVSLSPEEMAKYLADLCNDYPIRSIEDGMAEDDLEGWKALTDLIGNKVQLVGDDLFVTNSERLAMGIDKGLANSLLVKVNQIGTLSETLEAVDMAHRAGYTCVMSHRSGETEDATIADLAVATNCGQIKTGSLARSDRLAKYNQLIRIEEELGNSAHYAGAACFGRLAR</sequence>
<keyword id="KW-0963">Cytoplasm</keyword>
<keyword id="KW-0324">Glycolysis</keyword>
<keyword id="KW-0456">Lyase</keyword>
<keyword id="KW-0460">Magnesium</keyword>
<keyword id="KW-0479">Metal-binding</keyword>
<keyword id="KW-1185">Reference proteome</keyword>
<keyword id="KW-0964">Secreted</keyword>
<dbReference type="EC" id="4.2.1.11" evidence="1"/>
<dbReference type="EMBL" id="CP000157">
    <property type="protein sequence ID" value="ABC63240.1"/>
    <property type="molecule type" value="Genomic_DNA"/>
</dbReference>
<dbReference type="RefSeq" id="WP_011414076.1">
    <property type="nucleotide sequence ID" value="NC_007722.1"/>
</dbReference>
<dbReference type="SMR" id="Q2NAQ1"/>
<dbReference type="STRING" id="314225.ELI_05740"/>
<dbReference type="KEGG" id="eli:ELI_05740"/>
<dbReference type="eggNOG" id="COG0148">
    <property type="taxonomic scope" value="Bacteria"/>
</dbReference>
<dbReference type="HOGENOM" id="CLU_031223_2_1_5"/>
<dbReference type="OrthoDB" id="9804716at2"/>
<dbReference type="UniPathway" id="UPA00109">
    <property type="reaction ID" value="UER00187"/>
</dbReference>
<dbReference type="Proteomes" id="UP000008808">
    <property type="component" value="Chromosome"/>
</dbReference>
<dbReference type="GO" id="GO:0009986">
    <property type="term" value="C:cell surface"/>
    <property type="evidence" value="ECO:0007669"/>
    <property type="project" value="UniProtKB-SubCell"/>
</dbReference>
<dbReference type="GO" id="GO:0005576">
    <property type="term" value="C:extracellular region"/>
    <property type="evidence" value="ECO:0007669"/>
    <property type="project" value="UniProtKB-SubCell"/>
</dbReference>
<dbReference type="GO" id="GO:0000015">
    <property type="term" value="C:phosphopyruvate hydratase complex"/>
    <property type="evidence" value="ECO:0007669"/>
    <property type="project" value="InterPro"/>
</dbReference>
<dbReference type="GO" id="GO:0000287">
    <property type="term" value="F:magnesium ion binding"/>
    <property type="evidence" value="ECO:0007669"/>
    <property type="project" value="UniProtKB-UniRule"/>
</dbReference>
<dbReference type="GO" id="GO:0004634">
    <property type="term" value="F:phosphopyruvate hydratase activity"/>
    <property type="evidence" value="ECO:0007669"/>
    <property type="project" value="UniProtKB-UniRule"/>
</dbReference>
<dbReference type="GO" id="GO:0006096">
    <property type="term" value="P:glycolytic process"/>
    <property type="evidence" value="ECO:0007669"/>
    <property type="project" value="UniProtKB-UniRule"/>
</dbReference>
<dbReference type="CDD" id="cd03313">
    <property type="entry name" value="enolase"/>
    <property type="match status" value="1"/>
</dbReference>
<dbReference type="FunFam" id="3.20.20.120:FF:000001">
    <property type="entry name" value="Enolase"/>
    <property type="match status" value="1"/>
</dbReference>
<dbReference type="FunFam" id="3.30.390.10:FF:000001">
    <property type="entry name" value="Enolase"/>
    <property type="match status" value="1"/>
</dbReference>
<dbReference type="Gene3D" id="3.20.20.120">
    <property type="entry name" value="Enolase-like C-terminal domain"/>
    <property type="match status" value="1"/>
</dbReference>
<dbReference type="Gene3D" id="3.30.390.10">
    <property type="entry name" value="Enolase-like, N-terminal domain"/>
    <property type="match status" value="1"/>
</dbReference>
<dbReference type="HAMAP" id="MF_00318">
    <property type="entry name" value="Enolase"/>
    <property type="match status" value="1"/>
</dbReference>
<dbReference type="InterPro" id="IPR000941">
    <property type="entry name" value="Enolase"/>
</dbReference>
<dbReference type="InterPro" id="IPR036849">
    <property type="entry name" value="Enolase-like_C_sf"/>
</dbReference>
<dbReference type="InterPro" id="IPR029017">
    <property type="entry name" value="Enolase-like_N"/>
</dbReference>
<dbReference type="InterPro" id="IPR020810">
    <property type="entry name" value="Enolase_C"/>
</dbReference>
<dbReference type="InterPro" id="IPR020809">
    <property type="entry name" value="Enolase_CS"/>
</dbReference>
<dbReference type="InterPro" id="IPR020811">
    <property type="entry name" value="Enolase_N"/>
</dbReference>
<dbReference type="NCBIfam" id="TIGR01060">
    <property type="entry name" value="eno"/>
    <property type="match status" value="1"/>
</dbReference>
<dbReference type="PANTHER" id="PTHR11902">
    <property type="entry name" value="ENOLASE"/>
    <property type="match status" value="1"/>
</dbReference>
<dbReference type="PANTHER" id="PTHR11902:SF1">
    <property type="entry name" value="ENOLASE"/>
    <property type="match status" value="1"/>
</dbReference>
<dbReference type="Pfam" id="PF00113">
    <property type="entry name" value="Enolase_C"/>
    <property type="match status" value="1"/>
</dbReference>
<dbReference type="Pfam" id="PF03952">
    <property type="entry name" value="Enolase_N"/>
    <property type="match status" value="1"/>
</dbReference>
<dbReference type="PIRSF" id="PIRSF001400">
    <property type="entry name" value="Enolase"/>
    <property type="match status" value="1"/>
</dbReference>
<dbReference type="PRINTS" id="PR00148">
    <property type="entry name" value="ENOLASE"/>
</dbReference>
<dbReference type="SFLD" id="SFLDF00002">
    <property type="entry name" value="enolase"/>
    <property type="match status" value="1"/>
</dbReference>
<dbReference type="SFLD" id="SFLDG00178">
    <property type="entry name" value="enolase"/>
    <property type="match status" value="1"/>
</dbReference>
<dbReference type="SMART" id="SM01192">
    <property type="entry name" value="Enolase_C"/>
    <property type="match status" value="1"/>
</dbReference>
<dbReference type="SMART" id="SM01193">
    <property type="entry name" value="Enolase_N"/>
    <property type="match status" value="1"/>
</dbReference>
<dbReference type="SUPFAM" id="SSF51604">
    <property type="entry name" value="Enolase C-terminal domain-like"/>
    <property type="match status" value="1"/>
</dbReference>
<dbReference type="SUPFAM" id="SSF54826">
    <property type="entry name" value="Enolase N-terminal domain-like"/>
    <property type="match status" value="1"/>
</dbReference>
<dbReference type="PROSITE" id="PS00164">
    <property type="entry name" value="ENOLASE"/>
    <property type="match status" value="1"/>
</dbReference>
<name>ENO_ERYLH</name>
<gene>
    <name evidence="1" type="primary">eno</name>
    <name type="ordered locus">ELI_05740</name>
</gene>